<dbReference type="EMBL" id="CP000789">
    <property type="protein sequence ID" value="ABU69920.1"/>
    <property type="molecule type" value="Genomic_DNA"/>
</dbReference>
<dbReference type="SMR" id="A7MXP0"/>
<dbReference type="KEGG" id="vha:VIBHAR_00921"/>
<dbReference type="PATRIC" id="fig|338187.25.peg.1700"/>
<dbReference type="Proteomes" id="UP000008152">
    <property type="component" value="Chromosome I"/>
</dbReference>
<dbReference type="GO" id="GO:0042597">
    <property type="term" value="C:periplasmic space"/>
    <property type="evidence" value="ECO:0007669"/>
    <property type="project" value="UniProtKB-SubCell"/>
</dbReference>
<dbReference type="GO" id="GO:0031419">
    <property type="term" value="F:cobalamin binding"/>
    <property type="evidence" value="ECO:0007669"/>
    <property type="project" value="InterPro"/>
</dbReference>
<dbReference type="GO" id="GO:0071281">
    <property type="term" value="P:cellular response to iron ion"/>
    <property type="evidence" value="ECO:0007669"/>
    <property type="project" value="TreeGrafter"/>
</dbReference>
<dbReference type="GO" id="GO:0015889">
    <property type="term" value="P:cobalamin transport"/>
    <property type="evidence" value="ECO:0007669"/>
    <property type="project" value="UniProtKB-UniRule"/>
</dbReference>
<dbReference type="CDD" id="cd01144">
    <property type="entry name" value="BtuF"/>
    <property type="match status" value="1"/>
</dbReference>
<dbReference type="Gene3D" id="3.40.50.1980">
    <property type="entry name" value="Nitrogenase molybdenum iron protein domain"/>
    <property type="match status" value="2"/>
</dbReference>
<dbReference type="HAMAP" id="MF_01000">
    <property type="entry name" value="BtuF"/>
    <property type="match status" value="1"/>
</dbReference>
<dbReference type="InterPro" id="IPR050902">
    <property type="entry name" value="ABC_Transporter_SBP"/>
</dbReference>
<dbReference type="InterPro" id="IPR002491">
    <property type="entry name" value="ABC_transptr_periplasmic_BD"/>
</dbReference>
<dbReference type="InterPro" id="IPR023544">
    <property type="entry name" value="ABC_transptr_vit_B12-bd"/>
</dbReference>
<dbReference type="InterPro" id="IPR054828">
    <property type="entry name" value="Vit_B12_bind_prot"/>
</dbReference>
<dbReference type="NCBIfam" id="NF002894">
    <property type="entry name" value="PRK03379.1"/>
    <property type="match status" value="1"/>
</dbReference>
<dbReference type="NCBIfam" id="NF038402">
    <property type="entry name" value="TroA_like"/>
    <property type="match status" value="1"/>
</dbReference>
<dbReference type="PANTHER" id="PTHR30535:SF34">
    <property type="entry name" value="MOLYBDATE-BINDING PROTEIN MOLA"/>
    <property type="match status" value="1"/>
</dbReference>
<dbReference type="PANTHER" id="PTHR30535">
    <property type="entry name" value="VITAMIN B12-BINDING PROTEIN"/>
    <property type="match status" value="1"/>
</dbReference>
<dbReference type="Pfam" id="PF01497">
    <property type="entry name" value="Peripla_BP_2"/>
    <property type="match status" value="1"/>
</dbReference>
<dbReference type="SUPFAM" id="SSF53807">
    <property type="entry name" value="Helical backbone' metal receptor"/>
    <property type="match status" value="1"/>
</dbReference>
<dbReference type="PROSITE" id="PS50983">
    <property type="entry name" value="FE_B12_PBP"/>
    <property type="match status" value="1"/>
</dbReference>
<reference key="1">
    <citation type="submission" date="2007-08" db="EMBL/GenBank/DDBJ databases">
        <authorList>
            <consortium name="The Vibrio harveyi Genome Sequencing Project"/>
            <person name="Bassler B."/>
            <person name="Clifton S.W."/>
            <person name="Fulton L."/>
            <person name="Delehaunty K."/>
            <person name="Fronick C."/>
            <person name="Harrison M."/>
            <person name="Markivic C."/>
            <person name="Fulton R."/>
            <person name="Tin-Wollam A.-M."/>
            <person name="Shah N."/>
            <person name="Pepin K."/>
            <person name="Nash W."/>
            <person name="Thiruvilangam P."/>
            <person name="Bhonagiri V."/>
            <person name="Waters C."/>
            <person name="Tu K.C."/>
            <person name="Irgon J."/>
            <person name="Wilson R.K."/>
        </authorList>
    </citation>
    <scope>NUCLEOTIDE SEQUENCE [LARGE SCALE GENOMIC DNA]</scope>
    <source>
        <strain>ATCC BAA-1116 / BB120</strain>
    </source>
</reference>
<keyword id="KW-1015">Disulfide bond</keyword>
<keyword id="KW-0574">Periplasm</keyword>
<keyword id="KW-0732">Signal</keyword>
<keyword id="KW-0813">Transport</keyword>
<gene>
    <name evidence="1" type="primary">btuF</name>
    <name type="ordered locus">VIBHAR_00921</name>
</gene>
<comment type="function">
    <text evidence="1">Part of the ABC transporter complex BtuCDF involved in vitamin B12 import. Binds vitamin B12 and delivers it to the periplasmic surface of BtuC.</text>
</comment>
<comment type="subunit">
    <text evidence="1">The complex is composed of two ATP-binding proteins (BtuD), two transmembrane proteins (BtuC) and a solute-binding protein (BtuF).</text>
</comment>
<comment type="subcellular location">
    <subcellularLocation>
        <location evidence="1">Periplasm</location>
    </subcellularLocation>
</comment>
<comment type="similarity">
    <text evidence="1">Belongs to the BtuF family.</text>
</comment>
<evidence type="ECO:0000255" key="1">
    <source>
        <dbReference type="HAMAP-Rule" id="MF_01000"/>
    </source>
</evidence>
<protein>
    <recommendedName>
        <fullName evidence="1">Vitamin B12-binding protein</fullName>
    </recommendedName>
</protein>
<proteinExistence type="inferred from homology"/>
<sequence length="275" mass="30783">MMNKLCFALPLIFSDASFANGPAQRIISLAPHSTEIAYSAGLGDKLIAVSEMSDYPEQAKDLEKVSNYQGIKLERIIALQPDLVIAWPAGNPAKELEKLEQFGIPIYYSTTGTLEGIATNIEQLSQYSEKPEVGQKAAAEFRAQLEALKEKYNTEDKVSYFYQLSEKPIITVAGKNWPSEVFTFCGGENIFSKGSAPYPQVSIEQVITRQPEVLFASRHAMSNDGMWAEWKNDIPALGNNHVWSLNSDWINRPTSRTLNAITEVCEHFETVRQKR</sequence>
<name>BTUF_VIBC1</name>
<feature type="signal peptide" evidence="1">
    <location>
        <begin position="1"/>
        <end position="19"/>
    </location>
</feature>
<feature type="chain" id="PRO_1000062722" description="Vitamin B12-binding protein">
    <location>
        <begin position="20"/>
        <end position="275"/>
    </location>
</feature>
<feature type="domain" description="Fe/B12 periplasmic-binding" evidence="1">
    <location>
        <begin position="25"/>
        <end position="272"/>
    </location>
</feature>
<feature type="site" description="Important for BtuC binding" evidence="1">
    <location>
        <position position="74"/>
    </location>
</feature>
<feature type="site" description="Important for BtuC binding" evidence="1">
    <location>
        <position position="204"/>
    </location>
</feature>
<feature type="disulfide bond" evidence="1">
    <location>
        <begin position="185"/>
        <end position="265"/>
    </location>
</feature>
<organism>
    <name type="scientific">Vibrio campbellii (strain ATCC BAA-1116)</name>
    <dbReference type="NCBI Taxonomy" id="2902295"/>
    <lineage>
        <taxon>Bacteria</taxon>
        <taxon>Pseudomonadati</taxon>
        <taxon>Pseudomonadota</taxon>
        <taxon>Gammaproteobacteria</taxon>
        <taxon>Vibrionales</taxon>
        <taxon>Vibrionaceae</taxon>
        <taxon>Vibrio</taxon>
    </lineage>
</organism>
<accession>A7MXP0</accession>